<organism>
    <name type="scientific">Phenylobacterium zucineum (strain HLK1)</name>
    <dbReference type="NCBI Taxonomy" id="450851"/>
    <lineage>
        <taxon>Bacteria</taxon>
        <taxon>Pseudomonadati</taxon>
        <taxon>Pseudomonadota</taxon>
        <taxon>Alphaproteobacteria</taxon>
        <taxon>Caulobacterales</taxon>
        <taxon>Caulobacteraceae</taxon>
        <taxon>Phenylobacterium</taxon>
    </lineage>
</organism>
<reference key="1">
    <citation type="journal article" date="2008" name="BMC Genomics">
        <title>Complete genome of Phenylobacterium zucineum - a novel facultative intracellular bacterium isolated from human erythroleukemia cell line K562.</title>
        <authorList>
            <person name="Luo Y."/>
            <person name="Xu X."/>
            <person name="Ding Z."/>
            <person name="Liu Z."/>
            <person name="Zhang B."/>
            <person name="Yan Z."/>
            <person name="Sun J."/>
            <person name="Hu S."/>
            <person name="Hu X."/>
        </authorList>
    </citation>
    <scope>NUCLEOTIDE SEQUENCE [LARGE SCALE GENOMIC DNA]</scope>
    <source>
        <strain>HLK1</strain>
    </source>
</reference>
<gene>
    <name type="ordered locus">PHZ_c0077</name>
</gene>
<feature type="chain" id="PRO_1000192926" description="Putative pterin-4-alpha-carbinolamine dehydratase">
    <location>
        <begin position="1"/>
        <end position="97"/>
    </location>
</feature>
<name>PHS_PHEZH</name>
<sequence length="97" mass="10832">MSRPKKIGAEAALARLPTWAKAEGGRDAICKTFRFKDFNAAFGFMTRVAIRADQLDHHPEWFNVYNRVEVTLATHDADGVTELDMTLAGFMDEISGN</sequence>
<comment type="catalytic activity">
    <reaction evidence="1">
        <text>(4aS,6R)-4a-hydroxy-L-erythro-5,6,7,8-tetrahydrobiopterin = (6R)-L-erythro-6,7-dihydrobiopterin + H2O</text>
        <dbReference type="Rhea" id="RHEA:11920"/>
        <dbReference type="ChEBI" id="CHEBI:15377"/>
        <dbReference type="ChEBI" id="CHEBI:15642"/>
        <dbReference type="ChEBI" id="CHEBI:43120"/>
        <dbReference type="EC" id="4.2.1.96"/>
    </reaction>
</comment>
<comment type="similarity">
    <text evidence="1">Belongs to the pterin-4-alpha-carbinolamine dehydratase family.</text>
</comment>
<evidence type="ECO:0000255" key="1">
    <source>
        <dbReference type="HAMAP-Rule" id="MF_00434"/>
    </source>
</evidence>
<proteinExistence type="inferred from homology"/>
<dbReference type="EC" id="4.2.1.96" evidence="1"/>
<dbReference type="EMBL" id="CP000747">
    <property type="protein sequence ID" value="ACG76491.1"/>
    <property type="molecule type" value="Genomic_DNA"/>
</dbReference>
<dbReference type="RefSeq" id="WP_012520639.1">
    <property type="nucleotide sequence ID" value="NC_011144.1"/>
</dbReference>
<dbReference type="SMR" id="B4RBN1"/>
<dbReference type="STRING" id="450851.PHZ_c0077"/>
<dbReference type="KEGG" id="pzu:PHZ_c0077"/>
<dbReference type="eggNOG" id="COG2154">
    <property type="taxonomic scope" value="Bacteria"/>
</dbReference>
<dbReference type="HOGENOM" id="CLU_081974_3_2_5"/>
<dbReference type="OrthoDB" id="9794987at2"/>
<dbReference type="Proteomes" id="UP000001868">
    <property type="component" value="Chromosome"/>
</dbReference>
<dbReference type="GO" id="GO:0008124">
    <property type="term" value="F:4-alpha-hydroxytetrahydrobiopterin dehydratase activity"/>
    <property type="evidence" value="ECO:0007669"/>
    <property type="project" value="UniProtKB-UniRule"/>
</dbReference>
<dbReference type="GO" id="GO:0006729">
    <property type="term" value="P:tetrahydrobiopterin biosynthetic process"/>
    <property type="evidence" value="ECO:0007669"/>
    <property type="project" value="InterPro"/>
</dbReference>
<dbReference type="CDD" id="cd00914">
    <property type="entry name" value="PCD_DCoH_subfamily_b"/>
    <property type="match status" value="1"/>
</dbReference>
<dbReference type="Gene3D" id="3.30.1360.20">
    <property type="entry name" value="Transcriptional coactivator/pterin dehydratase"/>
    <property type="match status" value="1"/>
</dbReference>
<dbReference type="HAMAP" id="MF_00434">
    <property type="entry name" value="Pterin_4_alpha"/>
    <property type="match status" value="1"/>
</dbReference>
<dbReference type="InterPro" id="IPR036428">
    <property type="entry name" value="PCD_sf"/>
</dbReference>
<dbReference type="InterPro" id="IPR001533">
    <property type="entry name" value="Pterin_deHydtase"/>
</dbReference>
<dbReference type="NCBIfam" id="NF002018">
    <property type="entry name" value="PRK00823.1-3"/>
    <property type="match status" value="1"/>
</dbReference>
<dbReference type="NCBIfam" id="NF002020">
    <property type="entry name" value="PRK00823.1-5"/>
    <property type="match status" value="1"/>
</dbReference>
<dbReference type="PANTHER" id="PTHR12599">
    <property type="entry name" value="PTERIN-4-ALPHA-CARBINOLAMINE DEHYDRATASE"/>
    <property type="match status" value="1"/>
</dbReference>
<dbReference type="PANTHER" id="PTHR12599:SF0">
    <property type="entry name" value="PTERIN-4-ALPHA-CARBINOLAMINE DEHYDRATASE"/>
    <property type="match status" value="1"/>
</dbReference>
<dbReference type="Pfam" id="PF01329">
    <property type="entry name" value="Pterin_4a"/>
    <property type="match status" value="1"/>
</dbReference>
<dbReference type="SUPFAM" id="SSF55248">
    <property type="entry name" value="PCD-like"/>
    <property type="match status" value="1"/>
</dbReference>
<protein>
    <recommendedName>
        <fullName evidence="1">Putative pterin-4-alpha-carbinolamine dehydratase</fullName>
        <shortName evidence="1">PHS</shortName>
        <ecNumber evidence="1">4.2.1.96</ecNumber>
    </recommendedName>
    <alternativeName>
        <fullName evidence="1">4-alpha-hydroxy-tetrahydropterin dehydratase</fullName>
    </alternativeName>
    <alternativeName>
        <fullName evidence="1">Pterin carbinolamine dehydratase</fullName>
        <shortName evidence="1">PCD</shortName>
    </alternativeName>
</protein>
<accession>B4RBN1</accession>
<keyword id="KW-0456">Lyase</keyword>
<keyword id="KW-1185">Reference proteome</keyword>